<protein>
    <recommendedName>
        <fullName evidence="1">R2-like ligand binding oxidase</fullName>
        <ecNumber evidence="1">1.-.-.-</ecNumber>
    </recommendedName>
    <alternativeName>
        <fullName>Ribonucleotide reductase R2 subunit homolog</fullName>
    </alternativeName>
    <alternativeName>
        <fullName>Ribonucleotide reductase small subunit homolog</fullName>
    </alternativeName>
</protein>
<accession>A4TB76</accession>
<keyword id="KW-0408">Iron</keyword>
<keyword id="KW-0464">Manganese</keyword>
<keyword id="KW-0479">Metal-binding</keyword>
<keyword id="KW-0560">Oxidoreductase</keyword>
<organism>
    <name type="scientific">Mycolicibacterium gilvum (strain PYR-GCK)</name>
    <name type="common">Mycobacterium gilvum (strain PYR-GCK)</name>
    <dbReference type="NCBI Taxonomy" id="350054"/>
    <lineage>
        <taxon>Bacteria</taxon>
        <taxon>Bacillati</taxon>
        <taxon>Actinomycetota</taxon>
        <taxon>Actinomycetes</taxon>
        <taxon>Mycobacteriales</taxon>
        <taxon>Mycobacteriaceae</taxon>
        <taxon>Mycolicibacterium</taxon>
    </lineage>
</organism>
<evidence type="ECO:0000250" key="1">
    <source>
        <dbReference type="UniProtKB" id="P9WH69"/>
    </source>
</evidence>
<evidence type="ECO:0000305" key="2"/>
<comment type="function">
    <text evidence="1">Probable oxidase that might be involved in lipid metabolism.</text>
</comment>
<comment type="cofactor">
    <cofactor evidence="1">
        <name>Fe cation</name>
        <dbReference type="ChEBI" id="CHEBI:24875"/>
    </cofactor>
    <text evidence="1">Binds 1 Fe cation per subunit.</text>
</comment>
<comment type="cofactor">
    <cofactor evidence="1">
        <name>Mn(2+)</name>
        <dbReference type="ChEBI" id="CHEBI:29035"/>
    </cofactor>
    <text evidence="1">Binds 1 manganese ion per subunit. The iron and manganese ions form a dinuclear manganese-iron cluster.</text>
</comment>
<comment type="subunit">
    <text evidence="1">Homodimer.</text>
</comment>
<comment type="similarity">
    <text evidence="2">Belongs to the ribonucleoside diphosphate reductase small chain family. R2-like ligand binding oxidase subfamily.</text>
</comment>
<dbReference type="EC" id="1.-.-.-" evidence="1"/>
<dbReference type="EMBL" id="CP000656">
    <property type="protein sequence ID" value="ABP45538.1"/>
    <property type="molecule type" value="Genomic_DNA"/>
</dbReference>
<dbReference type="SMR" id="A4TB76"/>
<dbReference type="STRING" id="350054.Mflv_3061"/>
<dbReference type="KEGG" id="mgi:Mflv_3061"/>
<dbReference type="eggNOG" id="COG0208">
    <property type="taxonomic scope" value="Bacteria"/>
</dbReference>
<dbReference type="HOGENOM" id="CLU_072736_0_0_11"/>
<dbReference type="OrthoDB" id="5489780at2"/>
<dbReference type="GO" id="GO:0046872">
    <property type="term" value="F:metal ion binding"/>
    <property type="evidence" value="ECO:0007669"/>
    <property type="project" value="UniProtKB-KW"/>
</dbReference>
<dbReference type="GO" id="GO:0016491">
    <property type="term" value="F:oxidoreductase activity"/>
    <property type="evidence" value="ECO:0007669"/>
    <property type="project" value="UniProtKB-KW"/>
</dbReference>
<dbReference type="GO" id="GO:0009263">
    <property type="term" value="P:deoxyribonucleotide biosynthetic process"/>
    <property type="evidence" value="ECO:0007669"/>
    <property type="project" value="InterPro"/>
</dbReference>
<dbReference type="CDD" id="cd07911">
    <property type="entry name" value="RNRR2_Rv0233_like"/>
    <property type="match status" value="1"/>
</dbReference>
<dbReference type="Gene3D" id="1.10.620.20">
    <property type="entry name" value="Ribonucleotide Reductase, subunit A"/>
    <property type="match status" value="1"/>
</dbReference>
<dbReference type="InterPro" id="IPR009078">
    <property type="entry name" value="Ferritin-like_SF"/>
</dbReference>
<dbReference type="InterPro" id="IPR033908">
    <property type="entry name" value="R2LOX"/>
</dbReference>
<dbReference type="InterPro" id="IPR012348">
    <property type="entry name" value="RNR-like"/>
</dbReference>
<dbReference type="InterPro" id="IPR000358">
    <property type="entry name" value="RNR_small_fam"/>
</dbReference>
<dbReference type="NCBIfam" id="NF006199">
    <property type="entry name" value="PRK08326.1-2"/>
    <property type="match status" value="1"/>
</dbReference>
<dbReference type="NCBIfam" id="NF006200">
    <property type="entry name" value="PRK08326.1-3"/>
    <property type="match status" value="1"/>
</dbReference>
<dbReference type="NCBIfam" id="NF006201">
    <property type="entry name" value="PRK08326.1-4"/>
    <property type="match status" value="1"/>
</dbReference>
<dbReference type="Pfam" id="PF00268">
    <property type="entry name" value="Ribonuc_red_sm"/>
    <property type="match status" value="1"/>
</dbReference>
<dbReference type="SUPFAM" id="SSF47240">
    <property type="entry name" value="Ferritin-like"/>
    <property type="match status" value="1"/>
</dbReference>
<gene>
    <name type="ordered locus">Mflv_3061</name>
</gene>
<proteinExistence type="inferred from homology"/>
<reference key="1">
    <citation type="submission" date="2007-04" db="EMBL/GenBank/DDBJ databases">
        <title>Complete sequence of chromosome of Mycobacterium gilvum PYR-GCK.</title>
        <authorList>
            <consortium name="US DOE Joint Genome Institute"/>
            <person name="Copeland A."/>
            <person name="Lucas S."/>
            <person name="Lapidus A."/>
            <person name="Barry K."/>
            <person name="Detter J.C."/>
            <person name="Glavina del Rio T."/>
            <person name="Hammon N."/>
            <person name="Israni S."/>
            <person name="Dalin E."/>
            <person name="Tice H."/>
            <person name="Pitluck S."/>
            <person name="Chain P."/>
            <person name="Malfatti S."/>
            <person name="Shin M."/>
            <person name="Vergez L."/>
            <person name="Schmutz J."/>
            <person name="Larimer F."/>
            <person name="Land M."/>
            <person name="Hauser L."/>
            <person name="Kyrpides N."/>
            <person name="Mikhailova N."/>
            <person name="Miller C."/>
            <person name="Richardson P."/>
        </authorList>
    </citation>
    <scope>NUCLEOTIDE SEQUENCE [LARGE SCALE GENOMIC DNA]</scope>
    <source>
        <strain>PYR-GCK</strain>
    </source>
</reference>
<name>RIR2H_MYCGI</name>
<sequence>MNRTRSDSLAAGGLNWDSLPLRLFAGGNAKFWDPADIDFSRDRADWESLSTMERDWATRLCAEFIAGEEAVTQDIQPFMAAMRAEGRLGDEMYLTQFAFEEAKHTQVFRMWLDAVGITEDLQGYLDDLPAYRQMFYEELPASLDALATDPSPQAQVRASVTYNHVIEGMMALTGYYAWHRICVDRHILPGMQELVRRIGDDERRHMAWGTFTCRRHVAADDANWTVFEDRMNELIPLALQNTDDAFALYDEIPFGLTIEEFQQYAADKGMRRFGTISSARGRPLAEIDVDYTPLHLEDSFADEDRKALAASA</sequence>
<feature type="chain" id="PRO_0000375426" description="R2-like ligand binding oxidase">
    <location>
        <begin position="1"/>
        <end position="312"/>
    </location>
</feature>
<feature type="binding site" evidence="1">
    <location>
        <position position="68"/>
    </location>
    <ligand>
        <name>Mn(2+)</name>
        <dbReference type="ChEBI" id="CHEBI:29035"/>
    </ligand>
</feature>
<feature type="binding site" evidence="1">
    <location>
        <position position="101"/>
    </location>
    <ligand>
        <name>Fe cation</name>
        <dbReference type="ChEBI" id="CHEBI:24875"/>
    </ligand>
</feature>
<feature type="binding site" evidence="1">
    <location>
        <position position="101"/>
    </location>
    <ligand>
        <name>Mn(2+)</name>
        <dbReference type="ChEBI" id="CHEBI:29035"/>
    </ligand>
</feature>
<feature type="binding site" evidence="1">
    <location>
        <position position="104"/>
    </location>
    <ligand>
        <name>Mn(2+)</name>
        <dbReference type="ChEBI" id="CHEBI:29035"/>
    </ligand>
</feature>
<feature type="binding site" evidence="1">
    <location>
        <position position="167"/>
    </location>
    <ligand>
        <name>Fe cation</name>
        <dbReference type="ChEBI" id="CHEBI:24875"/>
    </ligand>
</feature>
<feature type="binding site" evidence="1">
    <location>
        <position position="202"/>
    </location>
    <ligand>
        <name>Fe cation</name>
        <dbReference type="ChEBI" id="CHEBI:24875"/>
    </ligand>
</feature>
<feature type="binding site" evidence="1">
    <location>
        <position position="205"/>
    </location>
    <ligand>
        <name>Fe cation</name>
        <dbReference type="ChEBI" id="CHEBI:24875"/>
    </ligand>
</feature>
<feature type="cross-link" description="3-(O4'-tyrosyl)-valine (Val-Tyr)" evidence="1">
    <location>
        <begin position="71"/>
        <end position="162"/>
    </location>
</feature>